<name>CAIT_SALCH</name>
<keyword id="KW-0050">Antiport</keyword>
<keyword id="KW-0997">Cell inner membrane</keyword>
<keyword id="KW-1003">Cell membrane</keyword>
<keyword id="KW-0472">Membrane</keyword>
<keyword id="KW-0812">Transmembrane</keyword>
<keyword id="KW-1133">Transmembrane helix</keyword>
<keyword id="KW-0813">Transport</keyword>
<accession>Q57TI7</accession>
<dbReference type="EMBL" id="AE017220">
    <property type="protein sequence ID" value="AAX63974.1"/>
    <property type="molecule type" value="Genomic_DNA"/>
</dbReference>
<dbReference type="RefSeq" id="WP_011264180.1">
    <property type="nucleotide sequence ID" value="NC_006905.1"/>
</dbReference>
<dbReference type="SMR" id="Q57TI7"/>
<dbReference type="KEGG" id="sec:SCH_0068"/>
<dbReference type="HOGENOM" id="CLU_010118_6_0_6"/>
<dbReference type="UniPathway" id="UPA00117"/>
<dbReference type="Proteomes" id="UP000000538">
    <property type="component" value="Chromosome"/>
</dbReference>
<dbReference type="GO" id="GO:0005886">
    <property type="term" value="C:plasma membrane"/>
    <property type="evidence" value="ECO:0007669"/>
    <property type="project" value="UniProtKB-SubCell"/>
</dbReference>
<dbReference type="GO" id="GO:0044667">
    <property type="term" value="F:(R)-carnitine:4-(trimethylammonio)butanoate antiporter activity"/>
    <property type="evidence" value="ECO:0007669"/>
    <property type="project" value="UniProtKB-UniRule"/>
</dbReference>
<dbReference type="GO" id="GO:1900751">
    <property type="term" value="P:4-(trimethylammonio)butanoate transport"/>
    <property type="evidence" value="ECO:0007669"/>
    <property type="project" value="InterPro"/>
</dbReference>
<dbReference type="GO" id="GO:0009437">
    <property type="term" value="P:carnitine metabolic process"/>
    <property type="evidence" value="ECO:0007669"/>
    <property type="project" value="UniProtKB-UniRule"/>
</dbReference>
<dbReference type="HAMAP" id="MF_01049">
    <property type="entry name" value="CaiT"/>
    <property type="match status" value="1"/>
</dbReference>
<dbReference type="InterPro" id="IPR018093">
    <property type="entry name" value="BCCT_CS"/>
</dbReference>
<dbReference type="InterPro" id="IPR000060">
    <property type="entry name" value="BCCT_transptr"/>
</dbReference>
<dbReference type="InterPro" id="IPR023449">
    <property type="entry name" value="BCCT_transptr_CaiT"/>
</dbReference>
<dbReference type="NCBIfam" id="TIGR00842">
    <property type="entry name" value="bcct"/>
    <property type="match status" value="1"/>
</dbReference>
<dbReference type="NCBIfam" id="NF002887">
    <property type="entry name" value="PRK03356.1"/>
    <property type="match status" value="1"/>
</dbReference>
<dbReference type="PANTHER" id="PTHR30047">
    <property type="entry name" value="HIGH-AFFINITY CHOLINE TRANSPORT PROTEIN-RELATED"/>
    <property type="match status" value="1"/>
</dbReference>
<dbReference type="PANTHER" id="PTHR30047:SF11">
    <property type="entry name" value="L-CARNITINE_GAMMA-BUTYROBETAINE ANTIPORTER"/>
    <property type="match status" value="1"/>
</dbReference>
<dbReference type="Pfam" id="PF02028">
    <property type="entry name" value="BCCT"/>
    <property type="match status" value="1"/>
</dbReference>
<dbReference type="PROSITE" id="PS01303">
    <property type="entry name" value="BCCT"/>
    <property type="match status" value="1"/>
</dbReference>
<comment type="function">
    <text evidence="1">Catalyzes the exchange of L-carnitine for gamma-butyrobetaine.</text>
</comment>
<comment type="catalytic activity">
    <reaction evidence="1">
        <text>4-(trimethylamino)butanoate(in) + (R)-carnitine(out) = 4-(trimethylamino)butanoate(out) + (R)-carnitine(in)</text>
        <dbReference type="Rhea" id="RHEA:29427"/>
        <dbReference type="ChEBI" id="CHEBI:16244"/>
        <dbReference type="ChEBI" id="CHEBI:16347"/>
    </reaction>
</comment>
<comment type="pathway">
    <text evidence="1">Amine and polyamine metabolism; carnitine metabolism.</text>
</comment>
<comment type="subunit">
    <text evidence="1">Homotrimer.</text>
</comment>
<comment type="subcellular location">
    <subcellularLocation>
        <location evidence="1">Cell inner membrane</location>
        <topology evidence="1">Multi-pass membrane protein</topology>
    </subcellularLocation>
</comment>
<comment type="similarity">
    <text evidence="1">Belongs to the BCCT transporter (TC 2.A.15) family. CaiT subfamily.</text>
</comment>
<gene>
    <name evidence="1" type="primary">caiT</name>
    <name type="ordered locus">SCH_0068</name>
</gene>
<organism>
    <name type="scientific">Salmonella choleraesuis (strain SC-B67)</name>
    <dbReference type="NCBI Taxonomy" id="321314"/>
    <lineage>
        <taxon>Bacteria</taxon>
        <taxon>Pseudomonadati</taxon>
        <taxon>Pseudomonadota</taxon>
        <taxon>Gammaproteobacteria</taxon>
        <taxon>Enterobacterales</taxon>
        <taxon>Enterobacteriaceae</taxon>
        <taxon>Salmonella</taxon>
    </lineage>
</organism>
<protein>
    <recommendedName>
        <fullName evidence="1">L-carnitine/gamma-butyrobetaine antiporter</fullName>
    </recommendedName>
</protein>
<evidence type="ECO:0000255" key="1">
    <source>
        <dbReference type="HAMAP-Rule" id="MF_01049"/>
    </source>
</evidence>
<feature type="chain" id="PRO_1000064333" description="L-carnitine/gamma-butyrobetaine antiporter">
    <location>
        <begin position="1"/>
        <end position="505"/>
    </location>
</feature>
<feature type="transmembrane region" description="Helical" evidence="1">
    <location>
        <begin position="10"/>
        <end position="30"/>
    </location>
</feature>
<feature type="transmembrane region" description="Helical" evidence="1">
    <location>
        <begin position="51"/>
        <end position="71"/>
    </location>
</feature>
<feature type="transmembrane region" description="Helical" evidence="1">
    <location>
        <begin position="92"/>
        <end position="112"/>
    </location>
</feature>
<feature type="transmembrane region" description="Helical" evidence="1">
    <location>
        <begin position="143"/>
        <end position="163"/>
    </location>
</feature>
<feature type="transmembrane region" description="Helical" evidence="1">
    <location>
        <begin position="195"/>
        <end position="215"/>
    </location>
</feature>
<feature type="transmembrane region" description="Helical" evidence="1">
    <location>
        <begin position="231"/>
        <end position="251"/>
    </location>
</feature>
<feature type="transmembrane region" description="Helical" evidence="1">
    <location>
        <begin position="263"/>
        <end position="283"/>
    </location>
</feature>
<feature type="transmembrane region" description="Helical" evidence="1">
    <location>
        <begin position="316"/>
        <end position="336"/>
    </location>
</feature>
<feature type="transmembrane region" description="Helical" evidence="1">
    <location>
        <begin position="347"/>
        <end position="367"/>
    </location>
</feature>
<feature type="transmembrane region" description="Helical" evidence="1">
    <location>
        <begin position="403"/>
        <end position="423"/>
    </location>
</feature>
<feature type="transmembrane region" description="Helical" evidence="1">
    <location>
        <begin position="446"/>
        <end position="466"/>
    </location>
</feature>
<feature type="transmembrane region" description="Helical" evidence="1">
    <location>
        <begin position="475"/>
        <end position="495"/>
    </location>
</feature>
<proteinExistence type="inferred from homology"/>
<reference key="1">
    <citation type="journal article" date="2005" name="Nucleic Acids Res.">
        <title>The genome sequence of Salmonella enterica serovar Choleraesuis, a highly invasive and resistant zoonotic pathogen.</title>
        <authorList>
            <person name="Chiu C.-H."/>
            <person name="Tang P."/>
            <person name="Chu C."/>
            <person name="Hu S."/>
            <person name="Bao Q."/>
            <person name="Yu J."/>
            <person name="Chou Y.-Y."/>
            <person name="Wang H.-S."/>
            <person name="Lee Y.-S."/>
        </authorList>
    </citation>
    <scope>NUCLEOTIDE SEQUENCE [LARGE SCALE GENOMIC DNA]</scope>
    <source>
        <strain>SC-B67</strain>
    </source>
</reference>
<sequence>MKNEKKKSGIEPKVFFPPLIIVGILCWLTVRDLDAANVVINAVFSYVTNVWGWAFEWYMVVMLFGWFWLVFGPYAKKRLGDEKPEFSTASWIFMMFASCTSAAVLFWGSIEIYYYISTPPFGLEPNSTGAKEIGLAYSLFHWGPLPWATYSFLSVAFAYFFFVRKMDVIRPSSTLVPLVGEKHAKGLFGTIVDNFYLVALIFAMGTSLGLATPLVTECMQWLFGIPHTLQLDAIIITCWIILNAICVACGLQKGVRIASDVRSYLSFLMLGWVFIVSGASFIMNYFTDSVGMLLMHLPRMLFYTDAIGKGGFPQGWTVFYWAWWVIYAIQMSIFLARISRGRTVRELCFGMVMGLTASTWILWTVLGSNTLLLMDKNILNIPQLIEQHGVARAIIETWAALPLSTATMWGFFILCFIATVTLINACSYTLAMSTCREVRDGEEPPLLVRIGWSVLVGIIGIVLLALGGLKPIQTAIIAGGCPLFFINIMVTLSFIKDAKVHWKDK</sequence>